<name>ACH1_CAEBR</name>
<gene>
    <name evidence="6" type="primary">acr-16</name>
    <name type="ORF">CBG01491</name>
</gene>
<evidence type="ECO:0000250" key="1"/>
<evidence type="ECO:0000250" key="2">
    <source>
        <dbReference type="UniProtKB" id="P02708"/>
    </source>
</evidence>
<evidence type="ECO:0000250" key="3">
    <source>
        <dbReference type="UniProtKB" id="P48180"/>
    </source>
</evidence>
<evidence type="ECO:0000255" key="4"/>
<evidence type="ECO:0000305" key="5"/>
<evidence type="ECO:0000312" key="6">
    <source>
        <dbReference type="EMBL" id="CAP22761.2"/>
    </source>
</evidence>
<accession>A8WQK3</accession>
<organism>
    <name type="scientific">Caenorhabditis briggsae</name>
    <dbReference type="NCBI Taxonomy" id="6238"/>
    <lineage>
        <taxon>Eukaryota</taxon>
        <taxon>Metazoa</taxon>
        <taxon>Ecdysozoa</taxon>
        <taxon>Nematoda</taxon>
        <taxon>Chromadorea</taxon>
        <taxon>Rhabditida</taxon>
        <taxon>Rhabditina</taxon>
        <taxon>Rhabditomorpha</taxon>
        <taxon>Rhabditoidea</taxon>
        <taxon>Rhabditidae</taxon>
        <taxon>Peloderinae</taxon>
        <taxon>Caenorhabditis</taxon>
    </lineage>
</organism>
<reference evidence="6" key="1">
    <citation type="journal article" date="2003" name="PLoS Biol.">
        <title>The genome sequence of Caenorhabditis briggsae: a platform for comparative genomics.</title>
        <authorList>
            <person name="Stein L.D."/>
            <person name="Bao Z."/>
            <person name="Blasiar D."/>
            <person name="Blumenthal T."/>
            <person name="Brent M.R."/>
            <person name="Chen N."/>
            <person name="Chinwalla A."/>
            <person name="Clarke L."/>
            <person name="Clee C."/>
            <person name="Coghlan A."/>
            <person name="Coulson A."/>
            <person name="D'Eustachio P."/>
            <person name="Fitch D.H.A."/>
            <person name="Fulton L.A."/>
            <person name="Fulton R.E."/>
            <person name="Griffiths-Jones S."/>
            <person name="Harris T.W."/>
            <person name="Hillier L.W."/>
            <person name="Kamath R."/>
            <person name="Kuwabara P.E."/>
            <person name="Mardis E.R."/>
            <person name="Marra M.A."/>
            <person name="Miner T.L."/>
            <person name="Minx P."/>
            <person name="Mullikin J.C."/>
            <person name="Plumb R.W."/>
            <person name="Rogers J."/>
            <person name="Schein J.E."/>
            <person name="Sohrmann M."/>
            <person name="Spieth J."/>
            <person name="Stajich J.E."/>
            <person name="Wei C."/>
            <person name="Willey D."/>
            <person name="Wilson R.K."/>
            <person name="Durbin R.M."/>
            <person name="Waterston R.H."/>
        </authorList>
    </citation>
    <scope>NUCLEOTIDE SEQUENCE [LARGE SCALE GENOMIC DNA]</scope>
    <source>
        <strain evidence="6">AF16</strain>
    </source>
</reference>
<dbReference type="EMBL" id="HE601420">
    <property type="protein sequence ID" value="CAP22761.2"/>
    <property type="molecule type" value="Genomic_DNA"/>
</dbReference>
<dbReference type="SMR" id="A8WQK3"/>
<dbReference type="FunCoup" id="A8WQK3">
    <property type="interactions" value="441"/>
</dbReference>
<dbReference type="STRING" id="6238.A8WQK3"/>
<dbReference type="GlyCosmos" id="A8WQK3">
    <property type="glycosylation" value="2 sites, No reported glycans"/>
</dbReference>
<dbReference type="EnsemblMetazoa" id="CBG01491.1">
    <property type="protein sequence ID" value="CBG01491.1"/>
    <property type="gene ID" value="WBGene00024720"/>
</dbReference>
<dbReference type="WormBase" id="CBG01491">
    <property type="protein sequence ID" value="CBP35005"/>
    <property type="gene ID" value="WBGene00024720"/>
    <property type="gene designation" value="Cbr-acr-16"/>
</dbReference>
<dbReference type="eggNOG" id="KOG3646">
    <property type="taxonomic scope" value="Eukaryota"/>
</dbReference>
<dbReference type="HOGENOM" id="CLU_018074_0_3_1"/>
<dbReference type="InParanoid" id="A8WQK3"/>
<dbReference type="OMA" id="NDYNLVW"/>
<dbReference type="OrthoDB" id="5975154at2759"/>
<dbReference type="Proteomes" id="UP000008549">
    <property type="component" value="Unassembled WGS sequence"/>
</dbReference>
<dbReference type="GO" id="GO:0005892">
    <property type="term" value="C:acetylcholine-gated channel complex"/>
    <property type="evidence" value="ECO:0000318"/>
    <property type="project" value="GO_Central"/>
</dbReference>
<dbReference type="GO" id="GO:0043005">
    <property type="term" value="C:neuron projection"/>
    <property type="evidence" value="ECO:0000318"/>
    <property type="project" value="GO_Central"/>
</dbReference>
<dbReference type="GO" id="GO:0005886">
    <property type="term" value="C:plasma membrane"/>
    <property type="evidence" value="ECO:0000318"/>
    <property type="project" value="GO_Central"/>
</dbReference>
<dbReference type="GO" id="GO:0045211">
    <property type="term" value="C:postsynaptic membrane"/>
    <property type="evidence" value="ECO:0007669"/>
    <property type="project" value="UniProtKB-SubCell"/>
</dbReference>
<dbReference type="GO" id="GO:0045202">
    <property type="term" value="C:synapse"/>
    <property type="evidence" value="ECO:0000318"/>
    <property type="project" value="GO_Central"/>
</dbReference>
<dbReference type="GO" id="GO:0022848">
    <property type="term" value="F:acetylcholine-gated monoatomic cation-selective channel activity"/>
    <property type="evidence" value="ECO:0007669"/>
    <property type="project" value="EnsemblMetazoa"/>
</dbReference>
<dbReference type="GO" id="GO:0005231">
    <property type="term" value="F:excitatory extracellular ligand-gated monoatomic ion channel activity"/>
    <property type="evidence" value="ECO:0000318"/>
    <property type="project" value="GO_Central"/>
</dbReference>
<dbReference type="GO" id="GO:0004888">
    <property type="term" value="F:transmembrane signaling receptor activity"/>
    <property type="evidence" value="ECO:0007669"/>
    <property type="project" value="InterPro"/>
</dbReference>
<dbReference type="GO" id="GO:1904315">
    <property type="term" value="F:transmitter-gated monoatomic ion channel activity involved in regulation of postsynaptic membrane potential"/>
    <property type="evidence" value="ECO:0000318"/>
    <property type="project" value="GO_Central"/>
</dbReference>
<dbReference type="GO" id="GO:0007268">
    <property type="term" value="P:chemical synaptic transmission"/>
    <property type="evidence" value="ECO:0000318"/>
    <property type="project" value="GO_Central"/>
</dbReference>
<dbReference type="GO" id="GO:0034220">
    <property type="term" value="P:monoatomic ion transmembrane transport"/>
    <property type="evidence" value="ECO:0000318"/>
    <property type="project" value="GO_Central"/>
</dbReference>
<dbReference type="GO" id="GO:0042391">
    <property type="term" value="P:regulation of membrane potential"/>
    <property type="evidence" value="ECO:0000318"/>
    <property type="project" value="GO_Central"/>
</dbReference>
<dbReference type="CDD" id="cd18997">
    <property type="entry name" value="LGIC_ECD_nAChR"/>
    <property type="match status" value="1"/>
</dbReference>
<dbReference type="CDD" id="cd19051">
    <property type="entry name" value="LGIC_TM_cation"/>
    <property type="match status" value="1"/>
</dbReference>
<dbReference type="FunFam" id="1.20.58.390:FF:000046">
    <property type="entry name" value="AcetylCholine Receptor"/>
    <property type="match status" value="1"/>
</dbReference>
<dbReference type="FunFam" id="1.20.58.390:FF:000159">
    <property type="entry name" value="Acetylcholine receptor subunit alpha-type acr-16"/>
    <property type="match status" value="1"/>
</dbReference>
<dbReference type="FunFam" id="2.70.170.10:FF:000016">
    <property type="entry name" value="Nicotinic acetylcholine receptor subunit"/>
    <property type="match status" value="1"/>
</dbReference>
<dbReference type="Gene3D" id="2.70.170.10">
    <property type="entry name" value="Neurotransmitter-gated ion-channel ligand-binding domain"/>
    <property type="match status" value="1"/>
</dbReference>
<dbReference type="Gene3D" id="1.20.58.390">
    <property type="entry name" value="Neurotransmitter-gated ion-channel transmembrane domain"/>
    <property type="match status" value="2"/>
</dbReference>
<dbReference type="InterPro" id="IPR006202">
    <property type="entry name" value="Neur_chan_lig-bd"/>
</dbReference>
<dbReference type="InterPro" id="IPR036734">
    <property type="entry name" value="Neur_chan_lig-bd_sf"/>
</dbReference>
<dbReference type="InterPro" id="IPR006201">
    <property type="entry name" value="Neur_channel"/>
</dbReference>
<dbReference type="InterPro" id="IPR036719">
    <property type="entry name" value="Neuro-gated_channel_TM_sf"/>
</dbReference>
<dbReference type="InterPro" id="IPR038050">
    <property type="entry name" value="Neuro_actylchol_rec"/>
</dbReference>
<dbReference type="InterPro" id="IPR006029">
    <property type="entry name" value="Neurotrans-gated_channel_TM"/>
</dbReference>
<dbReference type="InterPro" id="IPR018000">
    <property type="entry name" value="Neurotransmitter_ion_chnl_CS"/>
</dbReference>
<dbReference type="InterPro" id="IPR002394">
    <property type="entry name" value="Nicotinic_acetylcholine_rcpt"/>
</dbReference>
<dbReference type="NCBIfam" id="TIGR00860">
    <property type="entry name" value="LIC"/>
    <property type="match status" value="1"/>
</dbReference>
<dbReference type="PANTHER" id="PTHR18945">
    <property type="entry name" value="NEUROTRANSMITTER GATED ION CHANNEL"/>
    <property type="match status" value="1"/>
</dbReference>
<dbReference type="Pfam" id="PF02931">
    <property type="entry name" value="Neur_chan_LBD"/>
    <property type="match status" value="1"/>
</dbReference>
<dbReference type="Pfam" id="PF02932">
    <property type="entry name" value="Neur_chan_memb"/>
    <property type="match status" value="1"/>
</dbReference>
<dbReference type="PRINTS" id="PR00254">
    <property type="entry name" value="NICOTINICR"/>
</dbReference>
<dbReference type="PRINTS" id="PR00252">
    <property type="entry name" value="NRIONCHANNEL"/>
</dbReference>
<dbReference type="SUPFAM" id="SSF90112">
    <property type="entry name" value="Neurotransmitter-gated ion-channel transmembrane pore"/>
    <property type="match status" value="1"/>
</dbReference>
<dbReference type="SUPFAM" id="SSF63712">
    <property type="entry name" value="Nicotinic receptor ligand binding domain-like"/>
    <property type="match status" value="1"/>
</dbReference>
<dbReference type="PROSITE" id="PS00236">
    <property type="entry name" value="NEUROTR_ION_CHANNEL"/>
    <property type="match status" value="1"/>
</dbReference>
<protein>
    <recommendedName>
        <fullName evidence="3">Acetylcholine receptor subunit alpha-type acr-16</fullName>
    </recommendedName>
</protein>
<keyword id="KW-1003">Cell membrane</keyword>
<keyword id="KW-1015">Disulfide bond</keyword>
<keyword id="KW-0325">Glycoprotein</keyword>
<keyword id="KW-0407">Ion channel</keyword>
<keyword id="KW-0406">Ion transport</keyword>
<keyword id="KW-1071">Ligand-gated ion channel</keyword>
<keyword id="KW-0472">Membrane</keyword>
<keyword id="KW-0628">Postsynaptic cell membrane</keyword>
<keyword id="KW-0675">Receptor</keyword>
<keyword id="KW-1185">Reference proteome</keyword>
<keyword id="KW-0732">Signal</keyword>
<keyword id="KW-0770">Synapse</keyword>
<keyword id="KW-0812">Transmembrane</keyword>
<keyword id="KW-1133">Transmembrane helix</keyword>
<keyword id="KW-0813">Transport</keyword>
<feature type="signal peptide" evidence="4">
    <location>
        <begin position="1"/>
        <end position="19"/>
    </location>
</feature>
<feature type="chain" id="PRO_0000365627" description="Acetylcholine receptor subunit alpha-type acr-16" evidence="4">
    <location>
        <begin position="20"/>
        <end position="499"/>
    </location>
</feature>
<feature type="topological domain" description="Extracellular" evidence="4">
    <location>
        <begin position="20"/>
        <end position="232"/>
    </location>
</feature>
<feature type="transmembrane region" description="Helical" evidence="4">
    <location>
        <begin position="233"/>
        <end position="253"/>
    </location>
</feature>
<feature type="transmembrane region" description="Helical" evidence="4">
    <location>
        <begin position="261"/>
        <end position="281"/>
    </location>
</feature>
<feature type="transmembrane region" description="Helical" evidence="4">
    <location>
        <begin position="289"/>
        <end position="309"/>
    </location>
</feature>
<feature type="topological domain" description="Cytoplasmic" evidence="4">
    <location>
        <begin position="310"/>
        <end position="473"/>
    </location>
</feature>
<feature type="transmembrane region" description="Helical" evidence="4">
    <location>
        <begin position="474"/>
        <end position="494"/>
    </location>
</feature>
<feature type="topological domain" description="Extracellular" evidence="4">
    <location>
        <begin position="495"/>
        <end position="499"/>
    </location>
</feature>
<feature type="glycosylation site" description="N-linked (GlcNAc...) asparagine" evidence="4">
    <location>
        <position position="43"/>
    </location>
</feature>
<feature type="glycosylation site" description="N-linked (GlcNAc...) asparagine" evidence="4">
    <location>
        <position position="93"/>
    </location>
</feature>
<feature type="disulfide bond" evidence="2">
    <location>
        <begin position="147"/>
        <end position="161"/>
    </location>
</feature>
<feature type="disulfide bond" description="Associated with receptor activation" evidence="2">
    <location>
        <begin position="211"/>
        <end position="212"/>
    </location>
</feature>
<sequence length="499" mass="57264">MSSVCALLLSCALFLVAHGSLQERRLYEDLMRNYNNLERPVANHSEPVTVHLKVALQQIIDVDEKNQVVYVNAWLDYTWKDYNLVWDQAEYGNITDVRFPAGKIWKPDVLLYNSVDTNFDSTYQTNMIVYSSGLVHWVPPGIFKISCKIDIQWFPFDEQKCFFKFGSWTYDGYKLDLQPATGGFDISEYLPNGEWALPLTTVERNEKFYDCCPEPYPDVHFYLHMRRRTLYYGFNLIMPCILTTLMTLLGFTLPPDAGEKITLQITVLLSICFFLSIVSEMSPPTSEAVPLLGIFFTCCMIVVTASTVFTVYVLNLHYRTPETHDMGPWTRNLLLYWIPWILRMKRPGHNLTYASLPSLFASKPNRHSESLIRNIKDNEHSLSRANSFDADCRLNQYIMTQSVSNGLTSMGSIPSTMISSTNGALTDVSQQATLLILHRIYHELKIVTKRMIEGDKEEQASNNWKFAAMVVDRLCLYVFTIFIIASTIGIFWSAPYLVA</sequence>
<proteinExistence type="inferred from homology"/>
<comment type="function">
    <text evidence="1">After binding acetylcholine, the AChR responds by an extensive change in conformation that affects all subunits and leads to opening of an ion-conducting channel across the plasma membrane. A subunit of the levamisole-insensitive nicotinic receptor (By similarity).</text>
</comment>
<comment type="subcellular location">
    <subcellularLocation>
        <location evidence="3">Postsynaptic cell membrane</location>
        <topology evidence="3">Multi-pass membrane protein</topology>
    </subcellularLocation>
    <subcellularLocation>
        <location evidence="3">Cell membrane</location>
        <topology evidence="3">Multi-pass membrane protein</topology>
    </subcellularLocation>
    <text evidence="1">The cam-1 protein is required for correct localization.</text>
</comment>
<comment type="similarity">
    <text evidence="5">Belongs to the ligand-gated ion channel (TC 1.A.9) family. Acetylcholine receptor (TC 1.A.9.1) subfamily.</text>
</comment>